<name>DCUP_ECO24</name>
<reference key="1">
    <citation type="journal article" date="2008" name="J. Bacteriol.">
        <title>The pangenome structure of Escherichia coli: comparative genomic analysis of E. coli commensal and pathogenic isolates.</title>
        <authorList>
            <person name="Rasko D.A."/>
            <person name="Rosovitz M.J."/>
            <person name="Myers G.S.A."/>
            <person name="Mongodin E.F."/>
            <person name="Fricke W.F."/>
            <person name="Gajer P."/>
            <person name="Crabtree J."/>
            <person name="Sebaihia M."/>
            <person name="Thomson N.R."/>
            <person name="Chaudhuri R."/>
            <person name="Henderson I.R."/>
            <person name="Sperandio V."/>
            <person name="Ravel J."/>
        </authorList>
    </citation>
    <scope>NUCLEOTIDE SEQUENCE [LARGE SCALE GENOMIC DNA]</scope>
    <source>
        <strain>E24377A / ETEC</strain>
    </source>
</reference>
<comment type="function">
    <text evidence="1">Catalyzes the decarboxylation of four acetate groups of uroporphyrinogen-III to yield coproporphyrinogen-III.</text>
</comment>
<comment type="catalytic activity">
    <reaction evidence="1">
        <text>uroporphyrinogen III + 4 H(+) = coproporphyrinogen III + 4 CO2</text>
        <dbReference type="Rhea" id="RHEA:19865"/>
        <dbReference type="ChEBI" id="CHEBI:15378"/>
        <dbReference type="ChEBI" id="CHEBI:16526"/>
        <dbReference type="ChEBI" id="CHEBI:57308"/>
        <dbReference type="ChEBI" id="CHEBI:57309"/>
        <dbReference type="EC" id="4.1.1.37"/>
    </reaction>
</comment>
<comment type="pathway">
    <text evidence="1">Porphyrin-containing compound metabolism; protoporphyrin-IX biosynthesis; coproporphyrinogen-III from 5-aminolevulinate: step 4/4.</text>
</comment>
<comment type="subunit">
    <text evidence="1">Homodimer.</text>
</comment>
<comment type="subcellular location">
    <subcellularLocation>
        <location evidence="1">Cytoplasm</location>
    </subcellularLocation>
</comment>
<comment type="similarity">
    <text evidence="1">Belongs to the uroporphyrinogen decarboxylase family.</text>
</comment>
<dbReference type="EC" id="4.1.1.37" evidence="1"/>
<dbReference type="EMBL" id="CP000800">
    <property type="protein sequence ID" value="ABV20346.1"/>
    <property type="molecule type" value="Genomic_DNA"/>
</dbReference>
<dbReference type="RefSeq" id="WP_000137657.1">
    <property type="nucleotide sequence ID" value="NC_009801.1"/>
</dbReference>
<dbReference type="SMR" id="A7ZUL3"/>
<dbReference type="GeneID" id="93777897"/>
<dbReference type="KEGG" id="ecw:EcE24377A_4540"/>
<dbReference type="HOGENOM" id="CLU_040933_0_0_6"/>
<dbReference type="UniPathway" id="UPA00251">
    <property type="reaction ID" value="UER00321"/>
</dbReference>
<dbReference type="Proteomes" id="UP000001122">
    <property type="component" value="Chromosome"/>
</dbReference>
<dbReference type="GO" id="GO:0005829">
    <property type="term" value="C:cytosol"/>
    <property type="evidence" value="ECO:0007669"/>
    <property type="project" value="TreeGrafter"/>
</dbReference>
<dbReference type="GO" id="GO:0004853">
    <property type="term" value="F:uroporphyrinogen decarboxylase activity"/>
    <property type="evidence" value="ECO:0007669"/>
    <property type="project" value="UniProtKB-UniRule"/>
</dbReference>
<dbReference type="GO" id="GO:0019353">
    <property type="term" value="P:protoporphyrinogen IX biosynthetic process from glutamate"/>
    <property type="evidence" value="ECO:0007669"/>
    <property type="project" value="TreeGrafter"/>
</dbReference>
<dbReference type="CDD" id="cd00717">
    <property type="entry name" value="URO-D"/>
    <property type="match status" value="1"/>
</dbReference>
<dbReference type="FunFam" id="3.20.20.210:FF:000001">
    <property type="entry name" value="Uroporphyrinogen decarboxylase"/>
    <property type="match status" value="1"/>
</dbReference>
<dbReference type="Gene3D" id="3.20.20.210">
    <property type="match status" value="1"/>
</dbReference>
<dbReference type="HAMAP" id="MF_00218">
    <property type="entry name" value="URO_D"/>
    <property type="match status" value="1"/>
</dbReference>
<dbReference type="InterPro" id="IPR038071">
    <property type="entry name" value="UROD/MetE-like_sf"/>
</dbReference>
<dbReference type="InterPro" id="IPR006361">
    <property type="entry name" value="Uroporphyrinogen_deCO2ase_HemE"/>
</dbReference>
<dbReference type="InterPro" id="IPR000257">
    <property type="entry name" value="Uroporphyrinogen_deCOase"/>
</dbReference>
<dbReference type="NCBIfam" id="TIGR01464">
    <property type="entry name" value="hemE"/>
    <property type="match status" value="1"/>
</dbReference>
<dbReference type="PANTHER" id="PTHR21091">
    <property type="entry name" value="METHYLTETRAHYDROFOLATE:HOMOCYSTEINE METHYLTRANSFERASE RELATED"/>
    <property type="match status" value="1"/>
</dbReference>
<dbReference type="PANTHER" id="PTHR21091:SF169">
    <property type="entry name" value="UROPORPHYRINOGEN DECARBOXYLASE"/>
    <property type="match status" value="1"/>
</dbReference>
<dbReference type="Pfam" id="PF01208">
    <property type="entry name" value="URO-D"/>
    <property type="match status" value="1"/>
</dbReference>
<dbReference type="SUPFAM" id="SSF51726">
    <property type="entry name" value="UROD/MetE-like"/>
    <property type="match status" value="1"/>
</dbReference>
<dbReference type="PROSITE" id="PS00906">
    <property type="entry name" value="UROD_1"/>
    <property type="match status" value="1"/>
</dbReference>
<dbReference type="PROSITE" id="PS00907">
    <property type="entry name" value="UROD_2"/>
    <property type="match status" value="1"/>
</dbReference>
<evidence type="ECO:0000255" key="1">
    <source>
        <dbReference type="HAMAP-Rule" id="MF_00218"/>
    </source>
</evidence>
<sequence length="354" mass="39248">MTELKNDRYLRALLRQPVDVTPVWMMRQAGRYLPEYKATRAQAGDFMSLCKNAELACEVTLQPLRRYPLDAAILFSDILTVPDAMGLGLYFEAGEGPRFTSPVTCKADVDKLPIPDPEDELGYVMNAVRTIRRELKGEVPLIGFSGSPWTLATYMVEGGSSKAFTVIKKMMYADPQALHALLDKLAKSVTLYLNAQIKAGAQAVMIFDTWGGVLTGRDYQQFSLYYMHKIVDGLLRENDGRRVPVTLFTKGGGQWLEAMAETGCDALGLDWTTDIADARRRVGNKVALQGNMDPSMLYAPPARIEEEVATILAGFGHGEGHVFNLGHGIHQDVPPEHAGVFVEAVHRLSEQYHR</sequence>
<keyword id="KW-0963">Cytoplasm</keyword>
<keyword id="KW-0210">Decarboxylase</keyword>
<keyword id="KW-0456">Lyase</keyword>
<keyword id="KW-0627">Porphyrin biosynthesis</keyword>
<keyword id="KW-1185">Reference proteome</keyword>
<proteinExistence type="inferred from homology"/>
<gene>
    <name evidence="1" type="primary">hemE</name>
    <name type="ordered locus">EcE24377A_4540</name>
</gene>
<accession>A7ZUL3</accession>
<organism>
    <name type="scientific">Escherichia coli O139:H28 (strain E24377A / ETEC)</name>
    <dbReference type="NCBI Taxonomy" id="331111"/>
    <lineage>
        <taxon>Bacteria</taxon>
        <taxon>Pseudomonadati</taxon>
        <taxon>Pseudomonadota</taxon>
        <taxon>Gammaproteobacteria</taxon>
        <taxon>Enterobacterales</taxon>
        <taxon>Enterobacteriaceae</taxon>
        <taxon>Escherichia</taxon>
    </lineage>
</organism>
<protein>
    <recommendedName>
        <fullName evidence="1">Uroporphyrinogen decarboxylase</fullName>
        <shortName evidence="1">UPD</shortName>
        <shortName evidence="1">URO-D</shortName>
        <ecNumber evidence="1">4.1.1.37</ecNumber>
    </recommendedName>
</protein>
<feature type="chain" id="PRO_1000058638" description="Uroporphyrinogen decarboxylase">
    <location>
        <begin position="1"/>
        <end position="354"/>
    </location>
</feature>
<feature type="binding site" evidence="1">
    <location>
        <begin position="27"/>
        <end position="31"/>
    </location>
    <ligand>
        <name>substrate</name>
    </ligand>
</feature>
<feature type="binding site" evidence="1">
    <location>
        <position position="77"/>
    </location>
    <ligand>
        <name>substrate</name>
    </ligand>
</feature>
<feature type="binding site" evidence="1">
    <location>
        <position position="154"/>
    </location>
    <ligand>
        <name>substrate</name>
    </ligand>
</feature>
<feature type="binding site" evidence="1">
    <location>
        <position position="209"/>
    </location>
    <ligand>
        <name>substrate</name>
    </ligand>
</feature>
<feature type="binding site" evidence="1">
    <location>
        <position position="327"/>
    </location>
    <ligand>
        <name>substrate</name>
    </ligand>
</feature>
<feature type="site" description="Transition state stabilizer" evidence="1">
    <location>
        <position position="77"/>
    </location>
</feature>